<comment type="function">
    <text evidence="1">One of the components of the core complex of photosystem II (PSII). It binds chlorophyll and helps catalyze the primary light-induced photochemical processes of PSII. PSII is a light-driven water:plastoquinone oxidoreductase, using light energy to abstract electrons from H(2)O, generating O(2) and a proton gradient subsequently used for ATP formation.</text>
</comment>
<comment type="cofactor">
    <text evidence="1">Binds multiple chlorophylls and provides some of the ligands for the Ca-4Mn-5O cluster of the oxygen-evolving complex. It may also provide a ligand for a Cl- that is required for oxygen evolution. PSII binds additional chlorophylls, carotenoids and specific lipids.</text>
</comment>
<comment type="subunit">
    <text evidence="1">PSII is composed of 1 copy each of membrane proteins PsbA, PsbB, PsbC, PsbD, PsbE, PsbF, PsbH, PsbI, PsbJ, PsbK, PsbL, PsbM, PsbT, PsbX, PsbY, PsbZ, Psb30/Ycf12, at least 3 peripheral proteins of the oxygen-evolving complex and a large number of cofactors. It forms dimeric complexes.</text>
</comment>
<comment type="subcellular location">
    <subcellularLocation>
        <location evidence="1">Plastid</location>
        <location evidence="1">Chloroplast thylakoid membrane</location>
        <topology evidence="1">Multi-pass membrane protein</topology>
    </subcellularLocation>
</comment>
<comment type="similarity">
    <text evidence="1">Belongs to the PsbB/PsbC family. PsbC subfamily.</text>
</comment>
<feature type="propeptide" id="PRO_0000431164" evidence="1">
    <location>
        <begin position="1"/>
        <end position="14"/>
    </location>
</feature>
<feature type="chain" id="PRO_0000361419" description="Photosystem II CP43 reaction center protein" evidence="1">
    <location>
        <begin position="15"/>
        <end position="473"/>
    </location>
</feature>
<feature type="transmembrane region" description="Helical" evidence="1">
    <location>
        <begin position="69"/>
        <end position="93"/>
    </location>
</feature>
<feature type="transmembrane region" description="Helical" evidence="1">
    <location>
        <begin position="134"/>
        <end position="155"/>
    </location>
</feature>
<feature type="transmembrane region" description="Helical" evidence="1">
    <location>
        <begin position="178"/>
        <end position="200"/>
    </location>
</feature>
<feature type="transmembrane region" description="Helical" evidence="1">
    <location>
        <begin position="255"/>
        <end position="275"/>
    </location>
</feature>
<feature type="transmembrane region" description="Helical" evidence="1">
    <location>
        <begin position="291"/>
        <end position="312"/>
    </location>
</feature>
<feature type="transmembrane region" description="Helical" evidence="1">
    <location>
        <begin position="447"/>
        <end position="471"/>
    </location>
</feature>
<feature type="binding site" evidence="1">
    <location>
        <position position="367"/>
    </location>
    <ligand>
        <name>[CaMn4O5] cluster</name>
        <dbReference type="ChEBI" id="CHEBI:189552"/>
    </ligand>
</feature>
<feature type="modified residue" description="N-acetylthreonine" evidence="1">
    <location>
        <position position="15"/>
    </location>
</feature>
<feature type="modified residue" description="Phosphothreonine" evidence="1">
    <location>
        <position position="15"/>
    </location>
</feature>
<reference key="1">
    <citation type="journal article" date="2008" name="Theor. Appl. Genet.">
        <title>The complete nucleotide sequence of the cassava (Manihot esculenta) chloroplast genome and the evolution of atpF in Malpighiales: RNA editing and multiple losses of a group II intron.</title>
        <authorList>
            <person name="Daniell H."/>
            <person name="Wurdack K.J."/>
            <person name="Kanagaraj A."/>
            <person name="Lee S.-B."/>
            <person name="Saski C."/>
            <person name="Jansen R.K."/>
        </authorList>
    </citation>
    <scope>NUCLEOTIDE SEQUENCE [LARGE SCALE GENOMIC DNA]</scope>
    <source>
        <strain>cv. TME3</strain>
    </source>
</reference>
<gene>
    <name evidence="1" type="primary">psbC</name>
</gene>
<sequence length="473" mass="51878">MKTLYSLRRFYHVETLFNGTLSLAGRDQETTGFAWWAGNARLINLSGKLLGAHVAHAGLIVFWAGAMNLFEVAHFVPEKPMYEQGLILLPHLATLGWGVGPGGEVIDTFPYFVSGVLHLISSAVLGFGGIYHALLGPETLEESFPFFGYVWKDRNKMTTILGIHLILLGIGAFLLVFKALYFGGVYDTWAPGGGDVRKITNLTLSPSVIFGYLLKSPFGGEGWIVSVDDLEDIIGGHVWLGSICILGGIWHILTKPFAWARRALVWSGEAYLSYSLGALSVFGFIACCFVWFNNTAYPSEFYGPTGPEASQAQAFTFLVRDQRLGANVGSAQGPTGLGKYLMRSPTGEVIFGGETMRFWDLRAPWLEPLRGPNGLDLSRLKKDIQPWQERRSAEYMTHAPLGSLNSVGGVATEINAVNYVSPRSWLATSHFVLGFFLFVGHLWHAGRARAAAAGFEKGIDRDFEPVLSMTPLN</sequence>
<evidence type="ECO:0000255" key="1">
    <source>
        <dbReference type="HAMAP-Rule" id="MF_01496"/>
    </source>
</evidence>
<dbReference type="EMBL" id="EU117376">
    <property type="protein sequence ID" value="ABV66150.1"/>
    <property type="molecule type" value="Genomic_DNA"/>
</dbReference>
<dbReference type="RefSeq" id="YP_001718433.2">
    <property type="nucleotide sequence ID" value="NC_010433.1"/>
</dbReference>
<dbReference type="SMR" id="B1NWE6"/>
<dbReference type="GeneID" id="6000023"/>
<dbReference type="KEGG" id="mesc:6000023"/>
<dbReference type="OrthoDB" id="815545at2759"/>
<dbReference type="GO" id="GO:0009535">
    <property type="term" value="C:chloroplast thylakoid membrane"/>
    <property type="evidence" value="ECO:0007669"/>
    <property type="project" value="UniProtKB-SubCell"/>
</dbReference>
<dbReference type="GO" id="GO:0009523">
    <property type="term" value="C:photosystem II"/>
    <property type="evidence" value="ECO:0007669"/>
    <property type="project" value="UniProtKB-KW"/>
</dbReference>
<dbReference type="GO" id="GO:0016168">
    <property type="term" value="F:chlorophyll binding"/>
    <property type="evidence" value="ECO:0007669"/>
    <property type="project" value="UniProtKB-UniRule"/>
</dbReference>
<dbReference type="GO" id="GO:0045156">
    <property type="term" value="F:electron transporter, transferring electrons within the cyclic electron transport pathway of photosynthesis activity"/>
    <property type="evidence" value="ECO:0007669"/>
    <property type="project" value="InterPro"/>
</dbReference>
<dbReference type="GO" id="GO:0046872">
    <property type="term" value="F:metal ion binding"/>
    <property type="evidence" value="ECO:0007669"/>
    <property type="project" value="UniProtKB-KW"/>
</dbReference>
<dbReference type="GO" id="GO:0009772">
    <property type="term" value="P:photosynthetic electron transport in photosystem II"/>
    <property type="evidence" value="ECO:0007669"/>
    <property type="project" value="InterPro"/>
</dbReference>
<dbReference type="FunFam" id="1.10.10.670:FF:000001">
    <property type="entry name" value="Photosystem II CP43 reaction center protein"/>
    <property type="match status" value="1"/>
</dbReference>
<dbReference type="Gene3D" id="1.10.10.670">
    <property type="entry name" value="photosystem ii from thermosynechococcus elongatus"/>
    <property type="match status" value="1"/>
</dbReference>
<dbReference type="HAMAP" id="MF_01496">
    <property type="entry name" value="PSII_PsbC_CP43"/>
    <property type="match status" value="1"/>
</dbReference>
<dbReference type="InterPro" id="IPR000932">
    <property type="entry name" value="PS_antenna-like"/>
</dbReference>
<dbReference type="InterPro" id="IPR036001">
    <property type="entry name" value="PS_II_antenna-like_sf"/>
</dbReference>
<dbReference type="InterPro" id="IPR005869">
    <property type="entry name" value="PSII_PsbC"/>
</dbReference>
<dbReference type="InterPro" id="IPR044900">
    <property type="entry name" value="PSII_PsbC_sf"/>
</dbReference>
<dbReference type="NCBIfam" id="TIGR01153">
    <property type="entry name" value="psbC"/>
    <property type="match status" value="1"/>
</dbReference>
<dbReference type="Pfam" id="PF00421">
    <property type="entry name" value="PSII"/>
    <property type="match status" value="1"/>
</dbReference>
<dbReference type="SUPFAM" id="SSF161077">
    <property type="entry name" value="Photosystem II antenna protein-like"/>
    <property type="match status" value="1"/>
</dbReference>
<keyword id="KW-0007">Acetylation</keyword>
<keyword id="KW-0148">Chlorophyll</keyword>
<keyword id="KW-0150">Chloroplast</keyword>
<keyword id="KW-0157">Chromophore</keyword>
<keyword id="KW-0464">Manganese</keyword>
<keyword id="KW-0472">Membrane</keyword>
<keyword id="KW-0479">Metal-binding</keyword>
<keyword id="KW-0597">Phosphoprotein</keyword>
<keyword id="KW-0602">Photosynthesis</keyword>
<keyword id="KW-0604">Photosystem II</keyword>
<keyword id="KW-0934">Plastid</keyword>
<keyword id="KW-0793">Thylakoid</keyword>
<keyword id="KW-0812">Transmembrane</keyword>
<keyword id="KW-1133">Transmembrane helix</keyword>
<organism>
    <name type="scientific">Manihot esculenta</name>
    <name type="common">Cassava</name>
    <name type="synonym">Jatropha manihot</name>
    <dbReference type="NCBI Taxonomy" id="3983"/>
    <lineage>
        <taxon>Eukaryota</taxon>
        <taxon>Viridiplantae</taxon>
        <taxon>Streptophyta</taxon>
        <taxon>Embryophyta</taxon>
        <taxon>Tracheophyta</taxon>
        <taxon>Spermatophyta</taxon>
        <taxon>Magnoliopsida</taxon>
        <taxon>eudicotyledons</taxon>
        <taxon>Gunneridae</taxon>
        <taxon>Pentapetalae</taxon>
        <taxon>rosids</taxon>
        <taxon>fabids</taxon>
        <taxon>Malpighiales</taxon>
        <taxon>Euphorbiaceae</taxon>
        <taxon>Crotonoideae</taxon>
        <taxon>Manihoteae</taxon>
        <taxon>Manihot</taxon>
    </lineage>
</organism>
<protein>
    <recommendedName>
        <fullName evidence="1">Photosystem II CP43 reaction center protein</fullName>
    </recommendedName>
    <alternativeName>
        <fullName evidence="1">PSII 43 kDa protein</fullName>
    </alternativeName>
    <alternativeName>
        <fullName evidence="1">Protein CP-43</fullName>
    </alternativeName>
</protein>
<geneLocation type="chloroplast"/>
<accession>B1NWE6</accession>
<proteinExistence type="inferred from homology"/>
<name>PSBC_MANES</name>